<comment type="function">
    <text>Binding protein with a strong affinity to the bleomycin family of antibiotics. Binds to CL990; an antimitotic-antibiotic compound.</text>
</comment>
<comment type="miscellaneous">
    <text>This enzyme is encoded by the kanamycin and neomycin resistance transposon Tn5.</text>
</comment>
<comment type="similarity">
    <text evidence="2">Belongs to the bleomycin resistance protein family.</text>
</comment>
<keyword id="KW-0002">3D-structure</keyword>
<keyword id="KW-0046">Antibiotic resistance</keyword>
<keyword id="KW-0814">Transposable element</keyword>
<feature type="chain" id="PRO_0000068561" description="Bleomycin resistance protein">
    <location>
        <begin position="1"/>
        <end position="126"/>
    </location>
</feature>
<feature type="domain" description="VOC" evidence="1">
    <location>
        <begin position="1"/>
        <end position="119"/>
    </location>
</feature>
<feature type="strand" evidence="3">
    <location>
        <begin position="4"/>
        <end position="12"/>
    </location>
</feature>
<feature type="helix" evidence="3">
    <location>
        <begin position="14"/>
        <end position="22"/>
    </location>
</feature>
<feature type="turn" evidence="3">
    <location>
        <begin position="23"/>
        <end position="25"/>
    </location>
</feature>
<feature type="strand" evidence="3">
    <location>
        <begin position="27"/>
        <end position="31"/>
    </location>
</feature>
<feature type="strand" evidence="3">
    <location>
        <begin position="33"/>
        <end position="40"/>
    </location>
</feature>
<feature type="strand" evidence="3">
    <location>
        <begin position="43"/>
        <end position="49"/>
    </location>
</feature>
<feature type="helix" evidence="3">
    <location>
        <begin position="55"/>
        <end position="57"/>
    </location>
</feature>
<feature type="strand" evidence="3">
    <location>
        <begin position="61"/>
        <end position="67"/>
    </location>
</feature>
<feature type="helix" evidence="3">
    <location>
        <begin position="69"/>
        <end position="78"/>
    </location>
</feature>
<feature type="strand" evidence="3">
    <location>
        <begin position="85"/>
        <end position="96"/>
    </location>
</feature>
<feature type="strand" evidence="3">
    <location>
        <begin position="100"/>
        <end position="107"/>
    </location>
</feature>
<feature type="strand" evidence="3">
    <location>
        <begin position="113"/>
        <end position="118"/>
    </location>
</feature>
<feature type="helix" evidence="4">
    <location>
        <begin position="121"/>
        <end position="124"/>
    </location>
</feature>
<protein>
    <recommendedName>
        <fullName>Bleomycin resistance protein</fullName>
        <shortName>BRP</shortName>
    </recommendedName>
    <alternativeName>
        <fullName>CL990 resistance protein</fullName>
    </alternativeName>
</protein>
<proteinExistence type="evidence at protein level"/>
<sequence length="126" mass="14074">MTDQATPNLPSRDFDSTAAFYERLGFGIVFRDAGWMILQRGDLMLEFFAHPGLDPLASWFSCCLRLDDLAEFYRQCKSVGIQETSSGYPRIHAPELQEWGGTMAALVDPDGTLLRLIQNELLAGIS</sequence>
<evidence type="ECO:0000255" key="1">
    <source>
        <dbReference type="PROSITE-ProRule" id="PRU01163"/>
    </source>
</evidence>
<evidence type="ECO:0000305" key="2"/>
<evidence type="ECO:0007829" key="3">
    <source>
        <dbReference type="PDB" id="1ECS"/>
    </source>
</evidence>
<evidence type="ECO:0007829" key="4">
    <source>
        <dbReference type="PDB" id="1MH6"/>
    </source>
</evidence>
<name>BLE_KLEPN</name>
<accession>P13081</accession>
<gene>
    <name type="primary">ble</name>
</gene>
<reference key="1">
    <citation type="journal article" date="1985" name="Nucleic Acids Res.">
        <title>Completion of the nucleotide sequence of the central region of Tn5 confirms the presence of three resistance genes.</title>
        <authorList>
            <person name="Mazodier P."/>
            <person name="Cossart P."/>
            <person name="Giraud E."/>
            <person name="Gasser F."/>
        </authorList>
    </citation>
    <scope>NUCLEOTIDE SEQUENCE [GENOMIC DNA]</scope>
</reference>
<dbReference type="EMBL" id="U00004">
    <property type="protein sequence ID" value="AAA73391.1"/>
    <property type="molecule type" value="Unassigned_DNA"/>
</dbReference>
<dbReference type="EMBL" id="X01702">
    <property type="protein sequence ID" value="CAA25853.1"/>
    <property type="molecule type" value="Genomic_DNA"/>
</dbReference>
<dbReference type="RefSeq" id="WP_000131935.1">
    <property type="nucleotide sequence ID" value="NZ_VKSL01000036.1"/>
</dbReference>
<dbReference type="PDB" id="1ECS">
    <property type="method" value="X-ray"/>
    <property type="resolution" value="1.70 A"/>
    <property type="chains" value="A/B=1-126"/>
</dbReference>
<dbReference type="PDB" id="1EWJ">
    <property type="method" value="X-ray"/>
    <property type="resolution" value="2.50 A"/>
    <property type="chains" value="A/B/C/D/E/F/G/H=1-126"/>
</dbReference>
<dbReference type="PDB" id="1MH6">
    <property type="method" value="NMR"/>
    <property type="chains" value="A/B=2-126"/>
</dbReference>
<dbReference type="PDB" id="1NIQ">
    <property type="method" value="NMR"/>
    <property type="chains" value="B/C=1-126"/>
</dbReference>
<dbReference type="PDBsum" id="1ECS"/>
<dbReference type="PDBsum" id="1EWJ"/>
<dbReference type="PDBsum" id="1MH6"/>
<dbReference type="PDBsum" id="1NIQ"/>
<dbReference type="SMR" id="P13081"/>
<dbReference type="CARD" id="ARO:3005036">
    <property type="molecule name" value="BLMT"/>
    <property type="mechanism identifier" value="ARO:0001004"/>
    <property type="mechanism name" value="antibiotic inactivation"/>
</dbReference>
<dbReference type="EvolutionaryTrace" id="P13081"/>
<dbReference type="GO" id="GO:0046677">
    <property type="term" value="P:response to antibiotic"/>
    <property type="evidence" value="ECO:0007669"/>
    <property type="project" value="UniProtKB-KW"/>
</dbReference>
<dbReference type="CDD" id="cd08350">
    <property type="entry name" value="BLMT_like"/>
    <property type="match status" value="1"/>
</dbReference>
<dbReference type="Gene3D" id="3.10.180.10">
    <property type="entry name" value="2,3-Dihydroxybiphenyl 1,2-Dioxygenase, domain 1"/>
    <property type="match status" value="1"/>
</dbReference>
<dbReference type="InterPro" id="IPR000335">
    <property type="entry name" value="Bleomycin-R"/>
</dbReference>
<dbReference type="InterPro" id="IPR029068">
    <property type="entry name" value="Glyas_Bleomycin-R_OHBP_Dase"/>
</dbReference>
<dbReference type="InterPro" id="IPR004360">
    <property type="entry name" value="Glyas_Fos-R_dOase_dom"/>
</dbReference>
<dbReference type="InterPro" id="IPR037523">
    <property type="entry name" value="VOC"/>
</dbReference>
<dbReference type="NCBIfam" id="NF000005">
    <property type="entry name" value="ble_BLMT"/>
    <property type="match status" value="1"/>
</dbReference>
<dbReference type="Pfam" id="PF00903">
    <property type="entry name" value="Glyoxalase"/>
    <property type="match status" value="1"/>
</dbReference>
<dbReference type="PRINTS" id="PR00311">
    <property type="entry name" value="BLEOMYCINRST"/>
</dbReference>
<dbReference type="SUPFAM" id="SSF54593">
    <property type="entry name" value="Glyoxalase/Bleomycin resistance protein/Dihydroxybiphenyl dioxygenase"/>
    <property type="match status" value="1"/>
</dbReference>
<dbReference type="PROSITE" id="PS51819">
    <property type="entry name" value="VOC"/>
    <property type="match status" value="1"/>
</dbReference>
<organism>
    <name type="scientific">Klebsiella pneumoniae</name>
    <dbReference type="NCBI Taxonomy" id="573"/>
    <lineage>
        <taxon>Bacteria</taxon>
        <taxon>Pseudomonadati</taxon>
        <taxon>Pseudomonadota</taxon>
        <taxon>Gammaproteobacteria</taxon>
        <taxon>Enterobacterales</taxon>
        <taxon>Enterobacteriaceae</taxon>
        <taxon>Klebsiella/Raoultella group</taxon>
        <taxon>Klebsiella</taxon>
        <taxon>Klebsiella pneumoniae complex</taxon>
    </lineage>
</organism>